<feature type="chain" id="PRO_0000128598" description="Large ribosomal subunit protein uL14c">
    <location>
        <begin position="1"/>
        <end position="122"/>
    </location>
</feature>
<protein>
    <recommendedName>
        <fullName evidence="1">Large ribosomal subunit protein uL14c</fullName>
    </recommendedName>
    <alternativeName>
        <fullName evidence="2">50S ribosomal protein L14, chloroplastic</fullName>
    </alternativeName>
</protein>
<proteinExistence type="inferred from homology"/>
<sequence>MIQSQTYLNIADNSGARKIMCIRVLGASNRKCAHIGDVIIAIIKEAVPNMPLEKSEVVRAVVIRTCKEFERDNGMMIRSDDNAAVVIDQEGNPKGTRVFGPVAQELRQLNFTKIVSLAPEVL</sequence>
<reference key="1">
    <citation type="journal article" date="1994" name="Proc. Natl. Acad. Sci. U.S.A.">
        <title>Loss of all ndh genes as determined by sequencing the entire chloroplast genome of the black pine Pinus thunbergii.</title>
        <authorList>
            <person name="Wakasugi T."/>
            <person name="Tsudzuki J."/>
            <person name="Ito S."/>
            <person name="Nakashima K."/>
            <person name="Tsudzuki T."/>
            <person name="Sugiura M."/>
        </authorList>
    </citation>
    <scope>NUCLEOTIDE SEQUENCE [LARGE SCALE GENOMIC DNA]</scope>
</reference>
<accession>P41633</accession>
<keyword id="KW-0150">Chloroplast</keyword>
<keyword id="KW-0934">Plastid</keyword>
<keyword id="KW-0687">Ribonucleoprotein</keyword>
<keyword id="KW-0689">Ribosomal protein</keyword>
<keyword id="KW-0694">RNA-binding</keyword>
<keyword id="KW-0699">rRNA-binding</keyword>
<organism>
    <name type="scientific">Pinus thunbergii</name>
    <name type="common">Japanese black pine</name>
    <name type="synonym">Pinus thunbergiana</name>
    <dbReference type="NCBI Taxonomy" id="3350"/>
    <lineage>
        <taxon>Eukaryota</taxon>
        <taxon>Viridiplantae</taxon>
        <taxon>Streptophyta</taxon>
        <taxon>Embryophyta</taxon>
        <taxon>Tracheophyta</taxon>
        <taxon>Spermatophyta</taxon>
        <taxon>Pinopsida</taxon>
        <taxon>Pinidae</taxon>
        <taxon>Conifers I</taxon>
        <taxon>Pinales</taxon>
        <taxon>Pinaceae</taxon>
        <taxon>Pinus</taxon>
        <taxon>Pinus subgen. Pinus</taxon>
    </lineage>
</organism>
<geneLocation type="chloroplast"/>
<dbReference type="EMBL" id="D17510">
    <property type="protein sequence ID" value="BAA04400.1"/>
    <property type="molecule type" value="Genomic_DNA"/>
</dbReference>
<dbReference type="PIR" id="T07522">
    <property type="entry name" value="T07522"/>
</dbReference>
<dbReference type="RefSeq" id="NP_042443.1">
    <property type="nucleotide sequence ID" value="NC_001631.1"/>
</dbReference>
<dbReference type="SMR" id="P41633"/>
<dbReference type="GeneID" id="809060"/>
<dbReference type="GO" id="GO:0009507">
    <property type="term" value="C:chloroplast"/>
    <property type="evidence" value="ECO:0007669"/>
    <property type="project" value="UniProtKB-SubCell"/>
</dbReference>
<dbReference type="GO" id="GO:0022625">
    <property type="term" value="C:cytosolic large ribosomal subunit"/>
    <property type="evidence" value="ECO:0007669"/>
    <property type="project" value="TreeGrafter"/>
</dbReference>
<dbReference type="GO" id="GO:0070180">
    <property type="term" value="F:large ribosomal subunit rRNA binding"/>
    <property type="evidence" value="ECO:0007669"/>
    <property type="project" value="TreeGrafter"/>
</dbReference>
<dbReference type="GO" id="GO:0003735">
    <property type="term" value="F:structural constituent of ribosome"/>
    <property type="evidence" value="ECO:0007669"/>
    <property type="project" value="InterPro"/>
</dbReference>
<dbReference type="GO" id="GO:0006412">
    <property type="term" value="P:translation"/>
    <property type="evidence" value="ECO:0007669"/>
    <property type="project" value="UniProtKB-UniRule"/>
</dbReference>
<dbReference type="CDD" id="cd00337">
    <property type="entry name" value="Ribosomal_uL14"/>
    <property type="match status" value="1"/>
</dbReference>
<dbReference type="FunFam" id="2.40.150.20:FF:000002">
    <property type="entry name" value="50S ribosomal protein L14, chloroplastic"/>
    <property type="match status" value="1"/>
</dbReference>
<dbReference type="Gene3D" id="2.40.150.20">
    <property type="entry name" value="Ribosomal protein L14"/>
    <property type="match status" value="1"/>
</dbReference>
<dbReference type="HAMAP" id="MF_01367">
    <property type="entry name" value="Ribosomal_uL14"/>
    <property type="match status" value="1"/>
</dbReference>
<dbReference type="InterPro" id="IPR000218">
    <property type="entry name" value="Ribosomal_uL14"/>
</dbReference>
<dbReference type="InterPro" id="IPR005745">
    <property type="entry name" value="Ribosomal_uL14_bac-type"/>
</dbReference>
<dbReference type="InterPro" id="IPR036853">
    <property type="entry name" value="Ribosomal_uL14_sf"/>
</dbReference>
<dbReference type="NCBIfam" id="TIGR01067">
    <property type="entry name" value="rplN_bact"/>
    <property type="match status" value="1"/>
</dbReference>
<dbReference type="PANTHER" id="PTHR11761">
    <property type="entry name" value="50S/60S RIBOSOMAL PROTEIN L14/L23"/>
    <property type="match status" value="1"/>
</dbReference>
<dbReference type="PANTHER" id="PTHR11761:SF3">
    <property type="entry name" value="LARGE RIBOSOMAL SUBUNIT PROTEIN UL14M"/>
    <property type="match status" value="1"/>
</dbReference>
<dbReference type="Pfam" id="PF00238">
    <property type="entry name" value="Ribosomal_L14"/>
    <property type="match status" value="1"/>
</dbReference>
<dbReference type="SMART" id="SM01374">
    <property type="entry name" value="Ribosomal_L14"/>
    <property type="match status" value="1"/>
</dbReference>
<dbReference type="SUPFAM" id="SSF50193">
    <property type="entry name" value="Ribosomal protein L14"/>
    <property type="match status" value="1"/>
</dbReference>
<name>RK14_PINTH</name>
<evidence type="ECO:0000255" key="1">
    <source>
        <dbReference type="HAMAP-Rule" id="MF_01367"/>
    </source>
</evidence>
<evidence type="ECO:0000305" key="2"/>
<gene>
    <name evidence="1" type="primary">rpl14</name>
</gene>
<comment type="function">
    <text evidence="1">Binds to 23S rRNA.</text>
</comment>
<comment type="subunit">
    <text evidence="1">Part of the 50S ribosomal subunit.</text>
</comment>
<comment type="subcellular location">
    <subcellularLocation>
        <location>Plastid</location>
        <location>Chloroplast</location>
    </subcellularLocation>
</comment>
<comment type="similarity">
    <text evidence="1">Belongs to the universal ribosomal protein uL14 family.</text>
</comment>